<protein>
    <recommendedName>
        <fullName evidence="1">Replication restart protein DnaT</fullName>
    </recommendedName>
</protein>
<sequence>MSSRILTSDVIGIDVLLHDHHAVLAKSTGGAVAVFANNAPAFYAVTPARMAELLALEEKLSRPGSDVALDAQFYEEPEAAPVAIPCGKFAMYPAWQPDADFQRQAALWGVALREPVTAEELAAFIAYWQAEGKVFHHIQWQQKLARSVQISRSSNGGMPQRDINSVSEPDNHIPPGFRG</sequence>
<feature type="chain" id="PRO_0000228960" description="Replication restart protein DnaT">
    <location>
        <begin position="1"/>
        <end position="179"/>
    </location>
</feature>
<feature type="region of interest" description="Disordered" evidence="2">
    <location>
        <begin position="151"/>
        <end position="179"/>
    </location>
</feature>
<feature type="compositionally biased region" description="Polar residues" evidence="2">
    <location>
        <begin position="151"/>
        <end position="168"/>
    </location>
</feature>
<evidence type="ECO:0000255" key="1">
    <source>
        <dbReference type="HAMAP-Rule" id="MF_01061"/>
    </source>
</evidence>
<evidence type="ECO:0000256" key="2">
    <source>
        <dbReference type="SAM" id="MobiDB-lite"/>
    </source>
</evidence>
<keyword id="KW-0235">DNA replication</keyword>
<keyword id="KW-0238">DNA-binding</keyword>
<keyword id="KW-0639">Primosome</keyword>
<reference key="1">
    <citation type="journal article" date="2005" name="Nucleic Acids Res.">
        <title>The genome sequence of Salmonella enterica serovar Choleraesuis, a highly invasive and resistant zoonotic pathogen.</title>
        <authorList>
            <person name="Chiu C.-H."/>
            <person name="Tang P."/>
            <person name="Chu C."/>
            <person name="Hu S."/>
            <person name="Bao Q."/>
            <person name="Yu J."/>
            <person name="Chou Y.-Y."/>
            <person name="Wang H.-S."/>
            <person name="Lee Y.-S."/>
        </authorList>
    </citation>
    <scope>NUCLEOTIDE SEQUENCE [LARGE SCALE GENOMIC DNA]</scope>
    <source>
        <strain>SC-B67</strain>
    </source>
</reference>
<dbReference type="EMBL" id="AE017220">
    <property type="protein sequence ID" value="AAX68302.1"/>
    <property type="molecule type" value="Genomic_DNA"/>
</dbReference>
<dbReference type="RefSeq" id="WP_000098578.1">
    <property type="nucleotide sequence ID" value="NC_006905.1"/>
</dbReference>
<dbReference type="SMR" id="Q57G60"/>
<dbReference type="KEGG" id="sec:SCH_4396"/>
<dbReference type="HOGENOM" id="CLU_1501592_0_0_6"/>
<dbReference type="Proteomes" id="UP000000538">
    <property type="component" value="Chromosome"/>
</dbReference>
<dbReference type="GO" id="GO:1990077">
    <property type="term" value="C:primosome complex"/>
    <property type="evidence" value="ECO:0007669"/>
    <property type="project" value="UniProtKB-KW"/>
</dbReference>
<dbReference type="GO" id="GO:0006269">
    <property type="term" value="P:DNA replication, synthesis of primer"/>
    <property type="evidence" value="ECO:0007669"/>
    <property type="project" value="UniProtKB-UniRule"/>
</dbReference>
<dbReference type="Gene3D" id="1.10.8.1180">
    <property type="match status" value="1"/>
</dbReference>
<dbReference type="HAMAP" id="MF_01061">
    <property type="entry name" value="DnaT"/>
    <property type="match status" value="1"/>
</dbReference>
<dbReference type="InterPro" id="IPR020917">
    <property type="entry name" value="DnaT"/>
</dbReference>
<dbReference type="InterPro" id="IPR040480">
    <property type="entry name" value="DnaT_DNA_bind"/>
</dbReference>
<dbReference type="NCBIfam" id="NF002770">
    <property type="entry name" value="PRK02854.1"/>
    <property type="match status" value="1"/>
</dbReference>
<dbReference type="Pfam" id="PF17948">
    <property type="entry name" value="DnaT"/>
    <property type="match status" value="1"/>
</dbReference>
<gene>
    <name evidence="1" type="primary">dnaT</name>
    <name type="ordered locus">SCH_4396</name>
</gene>
<organism>
    <name type="scientific">Salmonella choleraesuis (strain SC-B67)</name>
    <dbReference type="NCBI Taxonomy" id="321314"/>
    <lineage>
        <taxon>Bacteria</taxon>
        <taxon>Pseudomonadati</taxon>
        <taxon>Pseudomonadota</taxon>
        <taxon>Gammaproteobacteria</taxon>
        <taxon>Enterobacterales</taxon>
        <taxon>Enterobacteriaceae</taxon>
        <taxon>Salmonella</taxon>
    </lineage>
</organism>
<accession>Q57G60</accession>
<proteinExistence type="inferred from homology"/>
<name>DNAT_SALCH</name>
<comment type="function">
    <text evidence="1">Involved in the restart of stalled replication forks, which reloads the replicative helicase on sites other than the origin of replication. Can function in multiple replication restart pathways. Displaces ssDNA from a PriB-ssDNA complex. Probably forms a spiral filament on ssDNA.</text>
</comment>
<comment type="subunit">
    <text evidence="1">Homooligomerizes. Interacts with PriB. Component of the replication restart primosome. Primosome assembly occurs via a 'hand-off' mechanism. PriA binds to replication forks, subsequently PriB then DnaT bind; DnaT then displaces ssDNA to generate the helicase loading substrate.</text>
</comment>
<comment type="similarity">
    <text evidence="1">Belongs to the DnaT family.</text>
</comment>